<sequence>MHFETVIGLEVHVELKTDSKMFSPSPAHFGAEPNSNTNVIDLAYPGVLPVVNKRAVDWAMRAAMALNMEIATESKFDRKNYFYPDNPKAYQISQFDQPIGENGYIDIEVDGETKRIGITRLHMEEDAGKSTHKGEYSLVDLNRQGTPLIEIVSEPDIRSPKEAYAYLEKLRSIIQYTGVSDVKMEEGSLRCDANISLRPYGQEKFGTKAELKNLNSFNYVRKGLEYEEKRQEEELLNGGEIGQETRRFDESTGKTILMRVKEGSDDYRYFPEPDIVPLYIDDAWKERVRQTIPELPDERKAKYVNELGLPAYDAHVLTLTKEMSDFFESTIEHGADVKLTSNWLMGGVNEYLNKNQVELLDTKLTPENLAGMIKLIEDGTMSSKIAKKVFPELAAKGGNAKQIMEDNGLVQISDEATLLKFVNEALDNNEQSVEDYKNGKGKAMGFLVGQIMKASKGQANPQLVNQLLKQELDKR</sequence>
<protein>
    <recommendedName>
        <fullName evidence="1">Aspartyl/glutamyl-tRNA(Asn/Gln) amidotransferase subunit B</fullName>
        <shortName evidence="1">Asp/Glu-ADT subunit B</shortName>
        <ecNumber evidence="1">6.3.5.-</ecNumber>
    </recommendedName>
</protein>
<proteinExistence type="evidence at protein level"/>
<dbReference type="EC" id="6.3.5.-" evidence="1"/>
<dbReference type="EMBL" id="BA000017">
    <property type="protein sequence ID" value="BAB58061.1"/>
    <property type="molecule type" value="Genomic_DNA"/>
</dbReference>
<dbReference type="RefSeq" id="WP_000545370.1">
    <property type="nucleotide sequence ID" value="NC_002758.2"/>
</dbReference>
<dbReference type="PDB" id="2DF4">
    <property type="method" value="X-ray"/>
    <property type="resolution" value="3.20 A"/>
    <property type="chains" value="B=1-475"/>
</dbReference>
<dbReference type="PDB" id="2DQN">
    <property type="method" value="X-ray"/>
    <property type="resolution" value="2.55 A"/>
    <property type="chains" value="B=1-475"/>
</dbReference>
<dbReference type="PDB" id="2F2A">
    <property type="method" value="X-ray"/>
    <property type="resolution" value="2.30 A"/>
    <property type="chains" value="B=1-475"/>
</dbReference>
<dbReference type="PDB" id="2G5H">
    <property type="method" value="X-ray"/>
    <property type="resolution" value="2.50 A"/>
    <property type="chains" value="B=1-475"/>
</dbReference>
<dbReference type="PDB" id="2G5I">
    <property type="method" value="X-ray"/>
    <property type="resolution" value="3.35 A"/>
    <property type="chains" value="B=1-475"/>
</dbReference>
<dbReference type="PDB" id="3IP4">
    <property type="method" value="X-ray"/>
    <property type="resolution" value="1.90 A"/>
    <property type="chains" value="B=1-475"/>
</dbReference>
<dbReference type="PDBsum" id="2DF4"/>
<dbReference type="PDBsum" id="2DQN"/>
<dbReference type="PDBsum" id="2F2A"/>
<dbReference type="PDBsum" id="2G5H"/>
<dbReference type="PDBsum" id="2G5I"/>
<dbReference type="PDBsum" id="3IP4"/>
<dbReference type="SMR" id="P64201"/>
<dbReference type="KEGG" id="sav:SAV1899"/>
<dbReference type="HOGENOM" id="CLU_019240_0_0_9"/>
<dbReference type="PhylomeDB" id="P64201"/>
<dbReference type="BRENDA" id="6.3.5.7">
    <property type="organism ID" value="3352"/>
</dbReference>
<dbReference type="EvolutionaryTrace" id="P64201"/>
<dbReference type="Proteomes" id="UP000002481">
    <property type="component" value="Chromosome"/>
</dbReference>
<dbReference type="GO" id="GO:0050566">
    <property type="term" value="F:asparaginyl-tRNA synthase (glutamine-hydrolyzing) activity"/>
    <property type="evidence" value="ECO:0007669"/>
    <property type="project" value="RHEA"/>
</dbReference>
<dbReference type="GO" id="GO:0005524">
    <property type="term" value="F:ATP binding"/>
    <property type="evidence" value="ECO:0007669"/>
    <property type="project" value="UniProtKB-KW"/>
</dbReference>
<dbReference type="GO" id="GO:0050567">
    <property type="term" value="F:glutaminyl-tRNA synthase (glutamine-hydrolyzing) activity"/>
    <property type="evidence" value="ECO:0007669"/>
    <property type="project" value="UniProtKB-UniRule"/>
</dbReference>
<dbReference type="GO" id="GO:0070681">
    <property type="term" value="P:glutaminyl-tRNAGln biosynthesis via transamidation"/>
    <property type="evidence" value="ECO:0007669"/>
    <property type="project" value="TreeGrafter"/>
</dbReference>
<dbReference type="GO" id="GO:0006412">
    <property type="term" value="P:translation"/>
    <property type="evidence" value="ECO:0007669"/>
    <property type="project" value="UniProtKB-UniRule"/>
</dbReference>
<dbReference type="FunFam" id="1.10.10.410:FF:000001">
    <property type="entry name" value="Aspartyl/glutamyl-tRNA(Asn/Gln) amidotransferase subunit B"/>
    <property type="match status" value="1"/>
</dbReference>
<dbReference type="FunFam" id="1.10.150.380:FF:000001">
    <property type="entry name" value="Aspartyl/glutamyl-tRNA(Asn/Gln) amidotransferase subunit B"/>
    <property type="match status" value="1"/>
</dbReference>
<dbReference type="Gene3D" id="1.10.10.410">
    <property type="match status" value="1"/>
</dbReference>
<dbReference type="Gene3D" id="1.10.150.380">
    <property type="entry name" value="GatB domain, N-terminal subdomain"/>
    <property type="match status" value="1"/>
</dbReference>
<dbReference type="HAMAP" id="MF_00121">
    <property type="entry name" value="GatB"/>
    <property type="match status" value="1"/>
</dbReference>
<dbReference type="InterPro" id="IPR017959">
    <property type="entry name" value="Asn/Gln-tRNA_amidoTrfase_suB/E"/>
</dbReference>
<dbReference type="InterPro" id="IPR006075">
    <property type="entry name" value="Asn/Gln-tRNA_Trfase_suB/E_cat"/>
</dbReference>
<dbReference type="InterPro" id="IPR018027">
    <property type="entry name" value="Asn/Gln_amidotransferase"/>
</dbReference>
<dbReference type="InterPro" id="IPR003789">
    <property type="entry name" value="Asn/Gln_tRNA_amidoTrase-B-like"/>
</dbReference>
<dbReference type="InterPro" id="IPR004413">
    <property type="entry name" value="GatB"/>
</dbReference>
<dbReference type="InterPro" id="IPR042114">
    <property type="entry name" value="GatB_C_1"/>
</dbReference>
<dbReference type="InterPro" id="IPR023168">
    <property type="entry name" value="GatB_Yqey_C_2"/>
</dbReference>
<dbReference type="InterPro" id="IPR017958">
    <property type="entry name" value="Gln-tRNA_amidoTrfase_suB_CS"/>
</dbReference>
<dbReference type="InterPro" id="IPR014746">
    <property type="entry name" value="Gln_synth/guanido_kin_cat_dom"/>
</dbReference>
<dbReference type="NCBIfam" id="TIGR00133">
    <property type="entry name" value="gatB"/>
    <property type="match status" value="1"/>
</dbReference>
<dbReference type="NCBIfam" id="NF004011">
    <property type="entry name" value="PRK05477.1-1"/>
    <property type="match status" value="1"/>
</dbReference>
<dbReference type="NCBIfam" id="NF004012">
    <property type="entry name" value="PRK05477.1-2"/>
    <property type="match status" value="1"/>
</dbReference>
<dbReference type="NCBIfam" id="NF004014">
    <property type="entry name" value="PRK05477.1-4"/>
    <property type="match status" value="1"/>
</dbReference>
<dbReference type="PANTHER" id="PTHR11659">
    <property type="entry name" value="GLUTAMYL-TRNA GLN AMIDOTRANSFERASE SUBUNIT B MITOCHONDRIAL AND PROKARYOTIC PET112-RELATED"/>
    <property type="match status" value="1"/>
</dbReference>
<dbReference type="PANTHER" id="PTHR11659:SF0">
    <property type="entry name" value="GLUTAMYL-TRNA(GLN) AMIDOTRANSFERASE SUBUNIT B, MITOCHONDRIAL"/>
    <property type="match status" value="1"/>
</dbReference>
<dbReference type="Pfam" id="PF02934">
    <property type="entry name" value="GatB_N"/>
    <property type="match status" value="1"/>
</dbReference>
<dbReference type="Pfam" id="PF02637">
    <property type="entry name" value="GatB_Yqey"/>
    <property type="match status" value="1"/>
</dbReference>
<dbReference type="SMART" id="SM00845">
    <property type="entry name" value="GatB_Yqey"/>
    <property type="match status" value="1"/>
</dbReference>
<dbReference type="SUPFAM" id="SSF89095">
    <property type="entry name" value="GatB/YqeY motif"/>
    <property type="match status" value="1"/>
</dbReference>
<dbReference type="SUPFAM" id="SSF55931">
    <property type="entry name" value="Glutamine synthetase/guanido kinase"/>
    <property type="match status" value="1"/>
</dbReference>
<dbReference type="PROSITE" id="PS01234">
    <property type="entry name" value="GATB"/>
    <property type="match status" value="1"/>
</dbReference>
<keyword id="KW-0002">3D-structure</keyword>
<keyword id="KW-0067">ATP-binding</keyword>
<keyword id="KW-0436">Ligase</keyword>
<keyword id="KW-0547">Nucleotide-binding</keyword>
<keyword id="KW-0648">Protein biosynthesis</keyword>
<accession>P64201</accession>
<accession>Q99SY7</accession>
<feature type="chain" id="PRO_0000148834" description="Aspartyl/glutamyl-tRNA(Asn/Gln) amidotransferase subunit B">
    <location>
        <begin position="1"/>
        <end position="475"/>
    </location>
</feature>
<feature type="strand" evidence="4">
    <location>
        <begin position="3"/>
        <end position="14"/>
    </location>
</feature>
<feature type="strand" evidence="4">
    <location>
        <begin position="21"/>
        <end position="28"/>
    </location>
</feature>
<feature type="turn" evidence="4">
    <location>
        <begin position="39"/>
        <end position="43"/>
    </location>
</feature>
<feature type="helix" evidence="4">
    <location>
        <begin position="53"/>
        <end position="65"/>
    </location>
</feature>
<feature type="strand" evidence="4">
    <location>
        <begin position="72"/>
        <end position="74"/>
    </location>
</feature>
<feature type="strand" evidence="4">
    <location>
        <begin position="77"/>
        <end position="80"/>
    </location>
</feature>
<feature type="strand" evidence="4">
    <location>
        <begin position="89"/>
        <end position="93"/>
    </location>
</feature>
<feature type="strand" evidence="4">
    <location>
        <begin position="95"/>
        <end position="97"/>
    </location>
</feature>
<feature type="strand" evidence="4">
    <location>
        <begin position="99"/>
        <end position="107"/>
    </location>
</feature>
<feature type="strand" evidence="4">
    <location>
        <begin position="109"/>
        <end position="112"/>
    </location>
</feature>
<feature type="strand" evidence="4">
    <location>
        <begin position="114"/>
        <end position="125"/>
    </location>
</feature>
<feature type="strand" evidence="4">
    <location>
        <begin position="129"/>
        <end position="133"/>
    </location>
</feature>
<feature type="strand" evidence="4">
    <location>
        <begin position="136"/>
        <end position="140"/>
    </location>
</feature>
<feature type="turn" evidence="4">
    <location>
        <begin position="142"/>
        <end position="145"/>
    </location>
</feature>
<feature type="strand" evidence="4">
    <location>
        <begin position="147"/>
        <end position="153"/>
    </location>
</feature>
<feature type="helix" evidence="4">
    <location>
        <begin position="160"/>
        <end position="177"/>
    </location>
</feature>
<feature type="helix" evidence="4">
    <location>
        <begin position="184"/>
        <end position="186"/>
    </location>
</feature>
<feature type="strand" evidence="4">
    <location>
        <begin position="188"/>
        <end position="199"/>
    </location>
</feature>
<feature type="strand" evidence="3">
    <location>
        <begin position="200"/>
        <end position="202"/>
    </location>
</feature>
<feature type="strand" evidence="4">
    <location>
        <begin position="208"/>
        <end position="212"/>
    </location>
</feature>
<feature type="helix" evidence="4">
    <location>
        <begin position="217"/>
        <end position="237"/>
    </location>
</feature>
<feature type="strand" evidence="4">
    <location>
        <begin position="243"/>
        <end position="248"/>
    </location>
</feature>
<feature type="turn" evidence="4">
    <location>
        <begin position="250"/>
        <end position="252"/>
    </location>
</feature>
<feature type="strand" evidence="4">
    <location>
        <begin position="255"/>
        <end position="261"/>
    </location>
</feature>
<feature type="strand" evidence="2">
    <location>
        <begin position="262"/>
        <end position="264"/>
    </location>
</feature>
<feature type="helix" evidence="4">
    <location>
        <begin position="282"/>
        <end position="289"/>
    </location>
</feature>
<feature type="helix" evidence="4">
    <location>
        <begin position="296"/>
        <end position="305"/>
    </location>
</feature>
<feature type="helix" evidence="4">
    <location>
        <begin position="311"/>
        <end position="317"/>
    </location>
</feature>
<feature type="strand" evidence="2">
    <location>
        <begin position="318"/>
        <end position="320"/>
    </location>
</feature>
<feature type="helix" evidence="4">
    <location>
        <begin position="321"/>
        <end position="331"/>
    </location>
</feature>
<feature type="turn" evidence="4">
    <location>
        <begin position="332"/>
        <end position="334"/>
    </location>
</feature>
<feature type="helix" evidence="4">
    <location>
        <begin position="337"/>
        <end position="345"/>
    </location>
</feature>
<feature type="helix" evidence="4">
    <location>
        <begin position="347"/>
        <end position="354"/>
    </location>
</feature>
<feature type="helix" evidence="4">
    <location>
        <begin position="359"/>
        <end position="361"/>
    </location>
</feature>
<feature type="helix" evidence="4">
    <location>
        <begin position="366"/>
        <end position="377"/>
    </location>
</feature>
<feature type="strand" evidence="3">
    <location>
        <begin position="379"/>
        <end position="381"/>
    </location>
</feature>
<feature type="helix" evidence="4">
    <location>
        <begin position="383"/>
        <end position="396"/>
    </location>
</feature>
<feature type="helix" evidence="4">
    <location>
        <begin position="400"/>
        <end position="405"/>
    </location>
</feature>
<feature type="turn" evidence="4">
    <location>
        <begin position="406"/>
        <end position="408"/>
    </location>
</feature>
<feature type="helix" evidence="4">
    <location>
        <begin position="415"/>
        <end position="428"/>
    </location>
</feature>
<feature type="helix" evidence="4">
    <location>
        <begin position="430"/>
        <end position="437"/>
    </location>
</feature>
<feature type="helix" evidence="4">
    <location>
        <begin position="443"/>
        <end position="454"/>
    </location>
</feature>
<feature type="helix" evidence="4">
    <location>
        <begin position="461"/>
        <end position="474"/>
    </location>
</feature>
<comment type="function">
    <text evidence="1">Allows the formation of correctly charged Asn-tRNA(Asn) or Gln-tRNA(Gln) through the transamidation of misacylated Asp-tRNA(Asn) or Glu-tRNA(Gln) in organisms which lack either or both of asparaginyl-tRNA or glutaminyl-tRNA synthetases. The reaction takes place in the presence of glutamine and ATP through an activated phospho-Asp-tRNA(Asn) or phospho-Glu-tRNA(Gln).</text>
</comment>
<comment type="catalytic activity">
    <reaction evidence="1">
        <text>L-glutamyl-tRNA(Gln) + L-glutamine + ATP + H2O = L-glutaminyl-tRNA(Gln) + L-glutamate + ADP + phosphate + H(+)</text>
        <dbReference type="Rhea" id="RHEA:17521"/>
        <dbReference type="Rhea" id="RHEA-COMP:9681"/>
        <dbReference type="Rhea" id="RHEA-COMP:9684"/>
        <dbReference type="ChEBI" id="CHEBI:15377"/>
        <dbReference type="ChEBI" id="CHEBI:15378"/>
        <dbReference type="ChEBI" id="CHEBI:29985"/>
        <dbReference type="ChEBI" id="CHEBI:30616"/>
        <dbReference type="ChEBI" id="CHEBI:43474"/>
        <dbReference type="ChEBI" id="CHEBI:58359"/>
        <dbReference type="ChEBI" id="CHEBI:78520"/>
        <dbReference type="ChEBI" id="CHEBI:78521"/>
        <dbReference type="ChEBI" id="CHEBI:456216"/>
    </reaction>
</comment>
<comment type="catalytic activity">
    <reaction evidence="1">
        <text>L-aspartyl-tRNA(Asn) + L-glutamine + ATP + H2O = L-asparaginyl-tRNA(Asn) + L-glutamate + ADP + phosphate + 2 H(+)</text>
        <dbReference type="Rhea" id="RHEA:14513"/>
        <dbReference type="Rhea" id="RHEA-COMP:9674"/>
        <dbReference type="Rhea" id="RHEA-COMP:9677"/>
        <dbReference type="ChEBI" id="CHEBI:15377"/>
        <dbReference type="ChEBI" id="CHEBI:15378"/>
        <dbReference type="ChEBI" id="CHEBI:29985"/>
        <dbReference type="ChEBI" id="CHEBI:30616"/>
        <dbReference type="ChEBI" id="CHEBI:43474"/>
        <dbReference type="ChEBI" id="CHEBI:58359"/>
        <dbReference type="ChEBI" id="CHEBI:78515"/>
        <dbReference type="ChEBI" id="CHEBI:78516"/>
        <dbReference type="ChEBI" id="CHEBI:456216"/>
    </reaction>
</comment>
<comment type="subunit">
    <text evidence="1">Heterotrimer of A, B and C subunits.</text>
</comment>
<comment type="similarity">
    <text evidence="1">Belongs to the GatB/GatE family. GatB subfamily.</text>
</comment>
<organism>
    <name type="scientific">Staphylococcus aureus (strain Mu50 / ATCC 700699)</name>
    <dbReference type="NCBI Taxonomy" id="158878"/>
    <lineage>
        <taxon>Bacteria</taxon>
        <taxon>Bacillati</taxon>
        <taxon>Bacillota</taxon>
        <taxon>Bacilli</taxon>
        <taxon>Bacillales</taxon>
        <taxon>Staphylococcaceae</taxon>
        <taxon>Staphylococcus</taxon>
    </lineage>
</organism>
<gene>
    <name evidence="1" type="primary">gatB</name>
    <name type="ordered locus">SAV1899</name>
</gene>
<name>GATB_STAAM</name>
<evidence type="ECO:0000255" key="1">
    <source>
        <dbReference type="HAMAP-Rule" id="MF_00121"/>
    </source>
</evidence>
<evidence type="ECO:0007829" key="2">
    <source>
        <dbReference type="PDB" id="2DF4"/>
    </source>
</evidence>
<evidence type="ECO:0007829" key="3">
    <source>
        <dbReference type="PDB" id="2F2A"/>
    </source>
</evidence>
<evidence type="ECO:0007829" key="4">
    <source>
        <dbReference type="PDB" id="3IP4"/>
    </source>
</evidence>
<reference key="1">
    <citation type="journal article" date="2001" name="Lancet">
        <title>Whole genome sequencing of meticillin-resistant Staphylococcus aureus.</title>
        <authorList>
            <person name="Kuroda M."/>
            <person name="Ohta T."/>
            <person name="Uchiyama I."/>
            <person name="Baba T."/>
            <person name="Yuzawa H."/>
            <person name="Kobayashi I."/>
            <person name="Cui L."/>
            <person name="Oguchi A."/>
            <person name="Aoki K."/>
            <person name="Nagai Y."/>
            <person name="Lian J.-Q."/>
            <person name="Ito T."/>
            <person name="Kanamori M."/>
            <person name="Matsumaru H."/>
            <person name="Maruyama A."/>
            <person name="Murakami H."/>
            <person name="Hosoyama A."/>
            <person name="Mizutani-Ui Y."/>
            <person name="Takahashi N.K."/>
            <person name="Sawano T."/>
            <person name="Inoue R."/>
            <person name="Kaito C."/>
            <person name="Sekimizu K."/>
            <person name="Hirakawa H."/>
            <person name="Kuhara S."/>
            <person name="Goto S."/>
            <person name="Yabuzaki J."/>
            <person name="Kanehisa M."/>
            <person name="Yamashita A."/>
            <person name="Oshima K."/>
            <person name="Furuya K."/>
            <person name="Yoshino C."/>
            <person name="Shiba T."/>
            <person name="Hattori M."/>
            <person name="Ogasawara N."/>
            <person name="Hayashi H."/>
            <person name="Hiramatsu K."/>
        </authorList>
    </citation>
    <scope>NUCLEOTIDE SEQUENCE [LARGE SCALE GENOMIC DNA]</scope>
    <source>
        <strain>Mu50 / ATCC 700699</strain>
    </source>
</reference>